<dbReference type="EC" id="5.4.99.25" evidence="1"/>
<dbReference type="EMBL" id="CP000395">
    <property type="protein sequence ID" value="ABH02080.1"/>
    <property type="molecule type" value="Genomic_DNA"/>
</dbReference>
<dbReference type="EMBL" id="CP002933">
    <property type="protein sequence ID" value="AEL70020.1"/>
    <property type="molecule type" value="Genomic_DNA"/>
</dbReference>
<dbReference type="RefSeq" id="WP_004789449.1">
    <property type="nucleotide sequence ID" value="NZ_CP160066.1"/>
</dbReference>
<dbReference type="SMR" id="Q0SM48"/>
<dbReference type="STRING" id="29518.BLA32_00205"/>
<dbReference type="GeneID" id="77265659"/>
<dbReference type="KEGG" id="baf:BAPKO_0856"/>
<dbReference type="KEGG" id="bafz:BafPKo_0831"/>
<dbReference type="PATRIC" id="fig|390236.22.peg.792"/>
<dbReference type="eggNOG" id="COG0130">
    <property type="taxonomic scope" value="Bacteria"/>
</dbReference>
<dbReference type="HOGENOM" id="CLU_032087_0_2_12"/>
<dbReference type="OrthoDB" id="9802309at2"/>
<dbReference type="Proteomes" id="UP000005216">
    <property type="component" value="Chromosome"/>
</dbReference>
<dbReference type="GO" id="GO:0003723">
    <property type="term" value="F:RNA binding"/>
    <property type="evidence" value="ECO:0007669"/>
    <property type="project" value="InterPro"/>
</dbReference>
<dbReference type="GO" id="GO:0160148">
    <property type="term" value="F:tRNA pseudouridine(55) synthase activity"/>
    <property type="evidence" value="ECO:0007669"/>
    <property type="project" value="UniProtKB-EC"/>
</dbReference>
<dbReference type="GO" id="GO:1990481">
    <property type="term" value="P:mRNA pseudouridine synthesis"/>
    <property type="evidence" value="ECO:0007669"/>
    <property type="project" value="TreeGrafter"/>
</dbReference>
<dbReference type="GO" id="GO:0031119">
    <property type="term" value="P:tRNA pseudouridine synthesis"/>
    <property type="evidence" value="ECO:0007669"/>
    <property type="project" value="UniProtKB-UniRule"/>
</dbReference>
<dbReference type="Gene3D" id="3.30.2350.10">
    <property type="entry name" value="Pseudouridine synthase"/>
    <property type="match status" value="1"/>
</dbReference>
<dbReference type="HAMAP" id="MF_01080">
    <property type="entry name" value="TruB_bact"/>
    <property type="match status" value="1"/>
</dbReference>
<dbReference type="InterPro" id="IPR020103">
    <property type="entry name" value="PsdUridine_synth_cat_dom_sf"/>
</dbReference>
<dbReference type="InterPro" id="IPR002501">
    <property type="entry name" value="PsdUridine_synth_N"/>
</dbReference>
<dbReference type="InterPro" id="IPR014780">
    <property type="entry name" value="tRNA_psdUridine_synth_TruB"/>
</dbReference>
<dbReference type="NCBIfam" id="TIGR00431">
    <property type="entry name" value="TruB"/>
    <property type="match status" value="1"/>
</dbReference>
<dbReference type="PANTHER" id="PTHR13767:SF2">
    <property type="entry name" value="PSEUDOURIDYLATE SYNTHASE TRUB1"/>
    <property type="match status" value="1"/>
</dbReference>
<dbReference type="PANTHER" id="PTHR13767">
    <property type="entry name" value="TRNA-PSEUDOURIDINE SYNTHASE"/>
    <property type="match status" value="1"/>
</dbReference>
<dbReference type="Pfam" id="PF01509">
    <property type="entry name" value="TruB_N"/>
    <property type="match status" value="1"/>
</dbReference>
<dbReference type="SUPFAM" id="SSF55120">
    <property type="entry name" value="Pseudouridine synthase"/>
    <property type="match status" value="1"/>
</dbReference>
<proteinExistence type="inferred from homology"/>
<feature type="chain" id="PRO_1000084554" description="tRNA pseudouridine synthase B">
    <location>
        <begin position="1"/>
        <end position="282"/>
    </location>
</feature>
<feature type="active site" description="Nucleophile" evidence="1">
    <location>
        <position position="39"/>
    </location>
</feature>
<protein>
    <recommendedName>
        <fullName evidence="1">tRNA pseudouridine synthase B</fullName>
        <ecNumber evidence="1">5.4.99.25</ecNumber>
    </recommendedName>
    <alternativeName>
        <fullName evidence="1">tRNA pseudouridine(55) synthase</fullName>
        <shortName evidence="1">Psi55 synthase</shortName>
    </alternativeName>
    <alternativeName>
        <fullName evidence="1">tRNA pseudouridylate synthase</fullName>
    </alternativeName>
    <alternativeName>
        <fullName evidence="1">tRNA-uridine isomerase</fullName>
    </alternativeName>
</protein>
<gene>
    <name evidence="1" type="primary">truB</name>
    <name type="ordered locus">BAPKO_0856</name>
    <name type="ordered locus">BafPKo_0831</name>
</gene>
<name>TRUB_BORAP</name>
<reference key="1">
    <citation type="journal article" date="2006" name="BMC Genomics">
        <title>Comparative genome analysis: selection pressure on the Borrelia vls cassettes is essential for infectivity.</title>
        <authorList>
            <person name="Gloeckner G."/>
            <person name="Schulte-Spechtel U."/>
            <person name="Schilhabel M."/>
            <person name="Felder M."/>
            <person name="Suehnel J."/>
            <person name="Wilske B."/>
            <person name="Platzer M."/>
        </authorList>
    </citation>
    <scope>NUCLEOTIDE SEQUENCE [LARGE SCALE GENOMIC DNA]</scope>
    <source>
        <strain>PKo</strain>
    </source>
</reference>
<reference key="2">
    <citation type="journal article" date="2011" name="J. Bacteriol.">
        <title>Whole-genome sequences of two Borrelia afzelii and two Borrelia garinii Lyme disease agent isolates.</title>
        <authorList>
            <person name="Casjens S.R."/>
            <person name="Mongodin E.F."/>
            <person name="Qiu W.G."/>
            <person name="Dunn J.J."/>
            <person name="Luft B.J."/>
            <person name="Fraser-Liggett C.M."/>
            <person name="Schutzer S.E."/>
        </authorList>
    </citation>
    <scope>NUCLEOTIDE SEQUENCE [LARGE SCALE GENOMIC DNA]</scope>
    <source>
        <strain>PKo</strain>
    </source>
</reference>
<evidence type="ECO:0000255" key="1">
    <source>
        <dbReference type="HAMAP-Rule" id="MF_01080"/>
    </source>
</evidence>
<keyword id="KW-0413">Isomerase</keyword>
<keyword id="KW-0819">tRNA processing</keyword>
<sequence>MENGFLLINKEQGKTSFETLFPIKKYFNTNHVGHAGILDKFASGILIALVGKYTKLANYFMSLDKEYVAEFRFGLETDTLDPNGRIVNKTDYIPNLEDIDLKLKDFVGEIYQSPPRFSSVHINGSRAYKLALNGKFFEIKKRRVNVYDIQRLSYDFSSSLLSLKISCSKGTYIRSIARDLAYSLNSCAYVSSLKRTKVGIFRLEDSTLCKNLSKASLISLESLKSFEKVCIDSSKINLVKNGAYVEIQININEFKILKSREGEILAVIKGIDLNKYKYVIIF</sequence>
<organism>
    <name type="scientific">Borreliella afzelii (strain PKo)</name>
    <name type="common">Borrelia afzelii</name>
    <dbReference type="NCBI Taxonomy" id="390236"/>
    <lineage>
        <taxon>Bacteria</taxon>
        <taxon>Pseudomonadati</taxon>
        <taxon>Spirochaetota</taxon>
        <taxon>Spirochaetia</taxon>
        <taxon>Spirochaetales</taxon>
        <taxon>Borreliaceae</taxon>
        <taxon>Borreliella</taxon>
    </lineage>
</organism>
<comment type="function">
    <text evidence="1">Responsible for synthesis of pseudouridine from uracil-55 in the psi GC loop of transfer RNAs.</text>
</comment>
<comment type="catalytic activity">
    <reaction evidence="1">
        <text>uridine(55) in tRNA = pseudouridine(55) in tRNA</text>
        <dbReference type="Rhea" id="RHEA:42532"/>
        <dbReference type="Rhea" id="RHEA-COMP:10101"/>
        <dbReference type="Rhea" id="RHEA-COMP:10102"/>
        <dbReference type="ChEBI" id="CHEBI:65314"/>
        <dbReference type="ChEBI" id="CHEBI:65315"/>
        <dbReference type="EC" id="5.4.99.25"/>
    </reaction>
</comment>
<comment type="similarity">
    <text evidence="1">Belongs to the pseudouridine synthase TruB family. Type 1 subfamily.</text>
</comment>
<accession>Q0SM48</accession>
<accession>G0IRY5</accession>